<organism>
    <name type="scientific">Polaromonas sp. (strain JS666 / ATCC BAA-500)</name>
    <dbReference type="NCBI Taxonomy" id="296591"/>
    <lineage>
        <taxon>Bacteria</taxon>
        <taxon>Pseudomonadati</taxon>
        <taxon>Pseudomonadota</taxon>
        <taxon>Betaproteobacteria</taxon>
        <taxon>Burkholderiales</taxon>
        <taxon>Comamonadaceae</taxon>
        <taxon>Polaromonas</taxon>
    </lineage>
</organism>
<reference key="1">
    <citation type="journal article" date="2008" name="Appl. Environ. Microbiol.">
        <title>The genome of Polaromonas sp. strain JS666: insights into the evolution of a hydrocarbon- and xenobiotic-degrading bacterium, and features of relevance to biotechnology.</title>
        <authorList>
            <person name="Mattes T.E."/>
            <person name="Alexander A.K."/>
            <person name="Richardson P.M."/>
            <person name="Munk A.C."/>
            <person name="Han C.S."/>
            <person name="Stothard P."/>
            <person name="Coleman N.V."/>
        </authorList>
    </citation>
    <scope>NUCLEOTIDE SEQUENCE [LARGE SCALE GENOMIC DNA]</scope>
    <source>
        <strain>JS666 / ATCC BAA-500</strain>
    </source>
</reference>
<gene>
    <name evidence="1" type="primary">queC</name>
    <name type="ordered locus">Bpro_0734</name>
</gene>
<proteinExistence type="inferred from homology"/>
<accession>Q12FK2</accession>
<feature type="chain" id="PRO_0000255926" description="7-cyano-7-deazaguanine synthase">
    <location>
        <begin position="1"/>
        <end position="235"/>
    </location>
</feature>
<feature type="binding site" evidence="1">
    <location>
        <begin position="9"/>
        <end position="19"/>
    </location>
    <ligand>
        <name>ATP</name>
        <dbReference type="ChEBI" id="CHEBI:30616"/>
    </ligand>
</feature>
<feature type="binding site" evidence="1">
    <location>
        <position position="197"/>
    </location>
    <ligand>
        <name>Zn(2+)</name>
        <dbReference type="ChEBI" id="CHEBI:29105"/>
    </ligand>
</feature>
<feature type="binding site" evidence="1">
    <location>
        <position position="212"/>
    </location>
    <ligand>
        <name>Zn(2+)</name>
        <dbReference type="ChEBI" id="CHEBI:29105"/>
    </ligand>
</feature>
<feature type="binding site" evidence="1">
    <location>
        <position position="215"/>
    </location>
    <ligand>
        <name>Zn(2+)</name>
        <dbReference type="ChEBI" id="CHEBI:29105"/>
    </ligand>
</feature>
<feature type="binding site" evidence="1">
    <location>
        <position position="218"/>
    </location>
    <ligand>
        <name>Zn(2+)</name>
        <dbReference type="ChEBI" id="CHEBI:29105"/>
    </ligand>
</feature>
<dbReference type="EC" id="6.3.4.20" evidence="1"/>
<dbReference type="EMBL" id="CP000316">
    <property type="protein sequence ID" value="ABE42690.1"/>
    <property type="molecule type" value="Genomic_DNA"/>
</dbReference>
<dbReference type="RefSeq" id="WP_011481693.1">
    <property type="nucleotide sequence ID" value="NC_007948.1"/>
</dbReference>
<dbReference type="SMR" id="Q12FK2"/>
<dbReference type="STRING" id="296591.Bpro_0734"/>
<dbReference type="KEGG" id="pol:Bpro_0734"/>
<dbReference type="eggNOG" id="COG0603">
    <property type="taxonomic scope" value="Bacteria"/>
</dbReference>
<dbReference type="HOGENOM" id="CLU_081854_0_0_4"/>
<dbReference type="OrthoDB" id="9789567at2"/>
<dbReference type="UniPathway" id="UPA00391"/>
<dbReference type="Proteomes" id="UP000001983">
    <property type="component" value="Chromosome"/>
</dbReference>
<dbReference type="GO" id="GO:0005524">
    <property type="term" value="F:ATP binding"/>
    <property type="evidence" value="ECO:0007669"/>
    <property type="project" value="UniProtKB-UniRule"/>
</dbReference>
<dbReference type="GO" id="GO:0016879">
    <property type="term" value="F:ligase activity, forming carbon-nitrogen bonds"/>
    <property type="evidence" value="ECO:0007669"/>
    <property type="project" value="UniProtKB-UniRule"/>
</dbReference>
<dbReference type="GO" id="GO:0008270">
    <property type="term" value="F:zinc ion binding"/>
    <property type="evidence" value="ECO:0007669"/>
    <property type="project" value="UniProtKB-UniRule"/>
</dbReference>
<dbReference type="GO" id="GO:0008616">
    <property type="term" value="P:queuosine biosynthetic process"/>
    <property type="evidence" value="ECO:0007669"/>
    <property type="project" value="UniProtKB-UniRule"/>
</dbReference>
<dbReference type="CDD" id="cd01995">
    <property type="entry name" value="QueC-like"/>
    <property type="match status" value="1"/>
</dbReference>
<dbReference type="Gene3D" id="3.40.50.620">
    <property type="entry name" value="HUPs"/>
    <property type="match status" value="1"/>
</dbReference>
<dbReference type="HAMAP" id="MF_01633">
    <property type="entry name" value="QueC"/>
    <property type="match status" value="1"/>
</dbReference>
<dbReference type="InterPro" id="IPR018317">
    <property type="entry name" value="QueC"/>
</dbReference>
<dbReference type="InterPro" id="IPR014729">
    <property type="entry name" value="Rossmann-like_a/b/a_fold"/>
</dbReference>
<dbReference type="NCBIfam" id="TIGR00364">
    <property type="entry name" value="7-cyano-7-deazaguanine synthase QueC"/>
    <property type="match status" value="1"/>
</dbReference>
<dbReference type="PANTHER" id="PTHR42914">
    <property type="entry name" value="7-CYANO-7-DEAZAGUANINE SYNTHASE"/>
    <property type="match status" value="1"/>
</dbReference>
<dbReference type="PANTHER" id="PTHR42914:SF1">
    <property type="entry name" value="7-CYANO-7-DEAZAGUANINE SYNTHASE"/>
    <property type="match status" value="1"/>
</dbReference>
<dbReference type="Pfam" id="PF06508">
    <property type="entry name" value="QueC"/>
    <property type="match status" value="1"/>
</dbReference>
<dbReference type="PIRSF" id="PIRSF006293">
    <property type="entry name" value="ExsB"/>
    <property type="match status" value="1"/>
</dbReference>
<dbReference type="SUPFAM" id="SSF52402">
    <property type="entry name" value="Adenine nucleotide alpha hydrolases-like"/>
    <property type="match status" value="1"/>
</dbReference>
<keyword id="KW-0067">ATP-binding</keyword>
<keyword id="KW-0436">Ligase</keyword>
<keyword id="KW-0479">Metal-binding</keyword>
<keyword id="KW-0547">Nucleotide-binding</keyword>
<keyword id="KW-0671">Queuosine biosynthesis</keyword>
<keyword id="KW-1185">Reference proteome</keyword>
<keyword id="KW-0862">Zinc</keyword>
<protein>
    <recommendedName>
        <fullName evidence="1">7-cyano-7-deazaguanine synthase</fullName>
        <ecNumber evidence="1">6.3.4.20</ecNumber>
    </recommendedName>
    <alternativeName>
        <fullName evidence="1">7-cyano-7-carbaguanine synthase</fullName>
    </alternativeName>
    <alternativeName>
        <fullName evidence="1">PreQ(0) synthase</fullName>
    </alternativeName>
    <alternativeName>
        <fullName evidence="1">Queuosine biosynthesis protein QueC</fullName>
    </alternativeName>
</protein>
<evidence type="ECO:0000255" key="1">
    <source>
        <dbReference type="HAMAP-Rule" id="MF_01633"/>
    </source>
</evidence>
<sequence length="235" mass="26189">MHTSALVLFSGGQDSTTCLAQALSKYERVETVAFDYGQRHKVELDARLNVLREIKSRFPHWAPKLGEDHLLDLAVLGQVSDTSLTRDVAFKMENSGLPNTFVPGRNLLFLTLAAALAYRRDLQVLVTGVCETDFSGYPDCRDDTIKAMQLALSLGMDKRFLIETPLMWIDKADTWRLAHALGGQALVDLIIEHTHTCYLGDRTHRQAWGYGCGACPACELRARGYERYAAALSKP</sequence>
<comment type="function">
    <text evidence="1">Catalyzes the ATP-dependent conversion of 7-carboxy-7-deazaguanine (CDG) to 7-cyano-7-deazaguanine (preQ(0)).</text>
</comment>
<comment type="catalytic activity">
    <reaction evidence="1">
        <text>7-carboxy-7-deazaguanine + NH4(+) + ATP = 7-cyano-7-deazaguanine + ADP + phosphate + H2O + H(+)</text>
        <dbReference type="Rhea" id="RHEA:27982"/>
        <dbReference type="ChEBI" id="CHEBI:15377"/>
        <dbReference type="ChEBI" id="CHEBI:15378"/>
        <dbReference type="ChEBI" id="CHEBI:28938"/>
        <dbReference type="ChEBI" id="CHEBI:30616"/>
        <dbReference type="ChEBI" id="CHEBI:43474"/>
        <dbReference type="ChEBI" id="CHEBI:45075"/>
        <dbReference type="ChEBI" id="CHEBI:61036"/>
        <dbReference type="ChEBI" id="CHEBI:456216"/>
        <dbReference type="EC" id="6.3.4.20"/>
    </reaction>
</comment>
<comment type="cofactor">
    <cofactor evidence="1">
        <name>Zn(2+)</name>
        <dbReference type="ChEBI" id="CHEBI:29105"/>
    </cofactor>
    <text evidence="1">Binds 1 zinc ion per subunit.</text>
</comment>
<comment type="pathway">
    <text evidence="1">Purine metabolism; 7-cyano-7-deazaguanine biosynthesis.</text>
</comment>
<comment type="similarity">
    <text evidence="1">Belongs to the QueC family.</text>
</comment>
<name>QUEC_POLSJ</name>